<evidence type="ECO:0000250" key="1"/>
<evidence type="ECO:0000255" key="2"/>
<evidence type="ECO:0000256" key="3">
    <source>
        <dbReference type="SAM" id="MobiDB-lite"/>
    </source>
</evidence>
<evidence type="ECO:0000305" key="4"/>
<comment type="function">
    <text evidence="1">Component of the Mediator complex, a coactivator involved in the regulated transcription of nearly all RNA polymerase II-dependent genes. Mediator functions as a bridge to convey information from gene-specific regulatory proteins to the basal RNA polymerase II transcription machinery. Mediator is recruited to promoters by direct interactions with regulatory proteins and serves as a scaffold for the assembly of a functional preinitiation complex with RNA polymerase II and the general transcription factors (By similarity).</text>
</comment>
<comment type="subunit">
    <text evidence="1">Component of the Mediator complex.</text>
</comment>
<comment type="subcellular location">
    <subcellularLocation>
        <location evidence="4">Nucleus</location>
    </subcellularLocation>
</comment>
<comment type="similarity">
    <text evidence="4">Belongs to the Mediator complex subunit 22 family.</text>
</comment>
<protein>
    <recommendedName>
        <fullName>Mediator of RNA polymerase II transcription subunit 22</fullName>
    </recommendedName>
    <alternativeName>
        <fullName>Mediator complex subunit 22</fullName>
    </alternativeName>
    <alternativeName>
        <fullName>Surfeit locus protein 5</fullName>
    </alternativeName>
</protein>
<feature type="chain" id="PRO_0000308570" description="Mediator of RNA polymerase II transcription subunit 22">
    <location>
        <begin position="1"/>
        <end position="201"/>
    </location>
</feature>
<feature type="region of interest" description="Disordered" evidence="3">
    <location>
        <begin position="182"/>
        <end position="201"/>
    </location>
</feature>
<feature type="coiled-coil region" evidence="2">
    <location>
        <begin position="93"/>
        <end position="123"/>
    </location>
</feature>
<reference key="1">
    <citation type="submission" date="2004-06" db="EMBL/GenBank/DDBJ databases">
        <authorList>
            <consortium name="NIH - Xenopus Gene Collection (XGC) project"/>
        </authorList>
    </citation>
    <scope>NUCLEOTIDE SEQUENCE [LARGE SCALE MRNA]</scope>
    <source>
        <tissue>Ovary</tissue>
    </source>
</reference>
<name>MED22_XENLA</name>
<keyword id="KW-0010">Activator</keyword>
<keyword id="KW-0175">Coiled coil</keyword>
<keyword id="KW-0539">Nucleus</keyword>
<keyword id="KW-1185">Reference proteome</keyword>
<keyword id="KW-0804">Transcription</keyword>
<keyword id="KW-0805">Transcription regulation</keyword>
<organism>
    <name type="scientific">Xenopus laevis</name>
    <name type="common">African clawed frog</name>
    <dbReference type="NCBI Taxonomy" id="8355"/>
    <lineage>
        <taxon>Eukaryota</taxon>
        <taxon>Metazoa</taxon>
        <taxon>Chordata</taxon>
        <taxon>Craniata</taxon>
        <taxon>Vertebrata</taxon>
        <taxon>Euteleostomi</taxon>
        <taxon>Amphibia</taxon>
        <taxon>Batrachia</taxon>
        <taxon>Anura</taxon>
        <taxon>Pipoidea</taxon>
        <taxon>Pipidae</taxon>
        <taxon>Xenopodinae</taxon>
        <taxon>Xenopus</taxon>
        <taxon>Xenopus</taxon>
    </lineage>
</organism>
<sequence length="201" mass="22946">MSQQRILPQSKETLLQSYNKRLKDDIKSIMDNFTEIIKTAKIEEEHQVSRSTQGEQDNYEMHVRSANIVRAGESLMKLVSDLKQFLILNDFPSVNESINQRNQQLRTLREECDKKLIALRDDIAIDLYELEEEYYSSSYSVCDPSDLPLCEVYWNRESTASSPEDLSVPLAPIMAEASTVTSQIHTPPHLNGHGAGMTEHT</sequence>
<gene>
    <name type="primary">med22</name>
    <name type="synonym">surf5</name>
</gene>
<dbReference type="EMBL" id="BC072852">
    <property type="protein sequence ID" value="AAH72852.1"/>
    <property type="molecule type" value="mRNA"/>
</dbReference>
<dbReference type="RefSeq" id="NP_001085498.1">
    <property type="nucleotide sequence ID" value="NM_001092029.1"/>
</dbReference>
<dbReference type="SMR" id="Q6GQ95"/>
<dbReference type="DNASU" id="443924"/>
<dbReference type="GeneID" id="443924"/>
<dbReference type="KEGG" id="xla:443924"/>
<dbReference type="AGR" id="Xenbase:XB-GENE-959340"/>
<dbReference type="CTD" id="443924"/>
<dbReference type="Xenbase" id="XB-GENE-959340">
    <property type="gene designation" value="med22.L"/>
</dbReference>
<dbReference type="OMA" id="KQAECDQ"/>
<dbReference type="OrthoDB" id="203279at2759"/>
<dbReference type="Proteomes" id="UP000186698">
    <property type="component" value="Chromosome 8L"/>
</dbReference>
<dbReference type="Bgee" id="443924">
    <property type="expression patterns" value="Expressed in egg cell and 19 other cell types or tissues"/>
</dbReference>
<dbReference type="GO" id="GO:0016592">
    <property type="term" value="C:mediator complex"/>
    <property type="evidence" value="ECO:0000318"/>
    <property type="project" value="GO_Central"/>
</dbReference>
<dbReference type="GO" id="GO:0003712">
    <property type="term" value="F:transcription coregulator activity"/>
    <property type="evidence" value="ECO:0007669"/>
    <property type="project" value="InterPro"/>
</dbReference>
<dbReference type="GO" id="GO:0006357">
    <property type="term" value="P:regulation of transcription by RNA polymerase II"/>
    <property type="evidence" value="ECO:0007669"/>
    <property type="project" value="InterPro"/>
</dbReference>
<dbReference type="InterPro" id="IPR009332">
    <property type="entry name" value="Med22"/>
</dbReference>
<dbReference type="PANTHER" id="PTHR12434">
    <property type="entry name" value="MEDIATOR OF RNA POLYMERASE II TRANSCRIPTION SUBUNIT 22"/>
    <property type="match status" value="1"/>
</dbReference>
<dbReference type="PANTHER" id="PTHR12434:SF6">
    <property type="entry name" value="MEDIATOR OF RNA POLYMERASE II TRANSCRIPTION SUBUNIT 22"/>
    <property type="match status" value="1"/>
</dbReference>
<dbReference type="Pfam" id="PF06179">
    <property type="entry name" value="Med22"/>
    <property type="match status" value="1"/>
</dbReference>
<proteinExistence type="evidence at transcript level"/>
<accession>Q6GQ95</accession>